<name>RL11_ACIET</name>
<comment type="function">
    <text evidence="1">Forms part of the ribosomal stalk which helps the ribosome interact with GTP-bound translation factors.</text>
</comment>
<comment type="subunit">
    <text evidence="1">Part of the ribosomal stalk of the 50S ribosomal subunit. Interacts with L10 and the large rRNA to form the base of the stalk. L10 forms an elongated spine to which L12 dimers bind in a sequential fashion forming a multimeric L10(L12)X complex.</text>
</comment>
<comment type="PTM">
    <text evidence="1">One or more lysine residues are methylated.</text>
</comment>
<comment type="similarity">
    <text evidence="1">Belongs to the universal ribosomal protein uL11 family.</text>
</comment>
<organism>
    <name type="scientific">Acidovorax ebreus (strain TPSY)</name>
    <name type="common">Diaphorobacter sp. (strain TPSY)</name>
    <dbReference type="NCBI Taxonomy" id="535289"/>
    <lineage>
        <taxon>Bacteria</taxon>
        <taxon>Pseudomonadati</taxon>
        <taxon>Pseudomonadota</taxon>
        <taxon>Betaproteobacteria</taxon>
        <taxon>Burkholderiales</taxon>
        <taxon>Comamonadaceae</taxon>
        <taxon>Diaphorobacter</taxon>
    </lineage>
</organism>
<dbReference type="EMBL" id="CP001392">
    <property type="protein sequence ID" value="ACM34679.1"/>
    <property type="molecule type" value="Genomic_DNA"/>
</dbReference>
<dbReference type="RefSeq" id="WP_011806988.1">
    <property type="nucleotide sequence ID" value="NC_011992.1"/>
</dbReference>
<dbReference type="SMR" id="B9MH51"/>
<dbReference type="GeneID" id="84683777"/>
<dbReference type="KEGG" id="dia:Dtpsy_3250"/>
<dbReference type="eggNOG" id="COG0080">
    <property type="taxonomic scope" value="Bacteria"/>
</dbReference>
<dbReference type="HOGENOM" id="CLU_074237_2_0_4"/>
<dbReference type="Proteomes" id="UP000000450">
    <property type="component" value="Chromosome"/>
</dbReference>
<dbReference type="GO" id="GO:0022625">
    <property type="term" value="C:cytosolic large ribosomal subunit"/>
    <property type="evidence" value="ECO:0007669"/>
    <property type="project" value="TreeGrafter"/>
</dbReference>
<dbReference type="GO" id="GO:0070180">
    <property type="term" value="F:large ribosomal subunit rRNA binding"/>
    <property type="evidence" value="ECO:0007669"/>
    <property type="project" value="UniProtKB-UniRule"/>
</dbReference>
<dbReference type="GO" id="GO:0003735">
    <property type="term" value="F:structural constituent of ribosome"/>
    <property type="evidence" value="ECO:0007669"/>
    <property type="project" value="InterPro"/>
</dbReference>
<dbReference type="GO" id="GO:0006412">
    <property type="term" value="P:translation"/>
    <property type="evidence" value="ECO:0007669"/>
    <property type="project" value="UniProtKB-UniRule"/>
</dbReference>
<dbReference type="CDD" id="cd00349">
    <property type="entry name" value="Ribosomal_L11"/>
    <property type="match status" value="1"/>
</dbReference>
<dbReference type="FunFam" id="1.10.10.250:FF:000001">
    <property type="entry name" value="50S ribosomal protein L11"/>
    <property type="match status" value="1"/>
</dbReference>
<dbReference type="FunFam" id="3.30.1550.10:FF:000001">
    <property type="entry name" value="50S ribosomal protein L11"/>
    <property type="match status" value="1"/>
</dbReference>
<dbReference type="Gene3D" id="1.10.10.250">
    <property type="entry name" value="Ribosomal protein L11, C-terminal domain"/>
    <property type="match status" value="1"/>
</dbReference>
<dbReference type="Gene3D" id="3.30.1550.10">
    <property type="entry name" value="Ribosomal protein L11/L12, N-terminal domain"/>
    <property type="match status" value="1"/>
</dbReference>
<dbReference type="HAMAP" id="MF_00736">
    <property type="entry name" value="Ribosomal_uL11"/>
    <property type="match status" value="1"/>
</dbReference>
<dbReference type="InterPro" id="IPR000911">
    <property type="entry name" value="Ribosomal_uL11"/>
</dbReference>
<dbReference type="InterPro" id="IPR006519">
    <property type="entry name" value="Ribosomal_uL11_bac-typ"/>
</dbReference>
<dbReference type="InterPro" id="IPR020783">
    <property type="entry name" value="Ribosomal_uL11_C"/>
</dbReference>
<dbReference type="InterPro" id="IPR036769">
    <property type="entry name" value="Ribosomal_uL11_C_sf"/>
</dbReference>
<dbReference type="InterPro" id="IPR020785">
    <property type="entry name" value="Ribosomal_uL11_CS"/>
</dbReference>
<dbReference type="InterPro" id="IPR020784">
    <property type="entry name" value="Ribosomal_uL11_N"/>
</dbReference>
<dbReference type="InterPro" id="IPR036796">
    <property type="entry name" value="Ribosomal_uL11_N_sf"/>
</dbReference>
<dbReference type="NCBIfam" id="TIGR01632">
    <property type="entry name" value="L11_bact"/>
    <property type="match status" value="1"/>
</dbReference>
<dbReference type="PANTHER" id="PTHR11661">
    <property type="entry name" value="60S RIBOSOMAL PROTEIN L12"/>
    <property type="match status" value="1"/>
</dbReference>
<dbReference type="PANTHER" id="PTHR11661:SF1">
    <property type="entry name" value="LARGE RIBOSOMAL SUBUNIT PROTEIN UL11M"/>
    <property type="match status" value="1"/>
</dbReference>
<dbReference type="Pfam" id="PF00298">
    <property type="entry name" value="Ribosomal_L11"/>
    <property type="match status" value="1"/>
</dbReference>
<dbReference type="Pfam" id="PF03946">
    <property type="entry name" value="Ribosomal_L11_N"/>
    <property type="match status" value="1"/>
</dbReference>
<dbReference type="SMART" id="SM00649">
    <property type="entry name" value="RL11"/>
    <property type="match status" value="1"/>
</dbReference>
<dbReference type="SUPFAM" id="SSF54747">
    <property type="entry name" value="Ribosomal L11/L12e N-terminal domain"/>
    <property type="match status" value="1"/>
</dbReference>
<dbReference type="SUPFAM" id="SSF46906">
    <property type="entry name" value="Ribosomal protein L11, C-terminal domain"/>
    <property type="match status" value="1"/>
</dbReference>
<dbReference type="PROSITE" id="PS00359">
    <property type="entry name" value="RIBOSOMAL_L11"/>
    <property type="match status" value="1"/>
</dbReference>
<proteinExistence type="inferred from homology"/>
<sequence length="143" mass="14915">MAKKIVGFIKLQVPAGKANPSPPIGPALGQRGLNIMEFCKAFNAQTQGVEPGLPLPVVITAFADKSFTFVIKTPPATVLIKKAIKLDKGSSNALSTKVGKITRAQLEEIAKTKLKDMNAASVDAAVRTLAGSARSMGVTVEGL</sequence>
<keyword id="KW-0488">Methylation</keyword>
<keyword id="KW-1185">Reference proteome</keyword>
<keyword id="KW-0687">Ribonucleoprotein</keyword>
<keyword id="KW-0689">Ribosomal protein</keyword>
<keyword id="KW-0694">RNA-binding</keyword>
<keyword id="KW-0699">rRNA-binding</keyword>
<protein>
    <recommendedName>
        <fullName evidence="1">Large ribosomal subunit protein uL11</fullName>
    </recommendedName>
    <alternativeName>
        <fullName evidence="2">50S ribosomal protein L11</fullName>
    </alternativeName>
</protein>
<gene>
    <name evidence="1" type="primary">rplK</name>
    <name type="ordered locus">Dtpsy_3250</name>
</gene>
<evidence type="ECO:0000255" key="1">
    <source>
        <dbReference type="HAMAP-Rule" id="MF_00736"/>
    </source>
</evidence>
<evidence type="ECO:0000305" key="2"/>
<reference key="1">
    <citation type="submission" date="2009-01" db="EMBL/GenBank/DDBJ databases">
        <title>Complete sequence of Diaphorobacter sp. TPSY.</title>
        <authorList>
            <consortium name="US DOE Joint Genome Institute"/>
            <person name="Lucas S."/>
            <person name="Copeland A."/>
            <person name="Lapidus A."/>
            <person name="Glavina del Rio T."/>
            <person name="Tice H."/>
            <person name="Bruce D."/>
            <person name="Goodwin L."/>
            <person name="Pitluck S."/>
            <person name="Chertkov O."/>
            <person name="Brettin T."/>
            <person name="Detter J.C."/>
            <person name="Han C."/>
            <person name="Larimer F."/>
            <person name="Land M."/>
            <person name="Hauser L."/>
            <person name="Kyrpides N."/>
            <person name="Mikhailova N."/>
            <person name="Coates J.D."/>
        </authorList>
    </citation>
    <scope>NUCLEOTIDE SEQUENCE [LARGE SCALE GENOMIC DNA]</scope>
    <source>
        <strain>TPSY</strain>
    </source>
</reference>
<accession>B9MH51</accession>
<feature type="chain" id="PRO_1000195623" description="Large ribosomal subunit protein uL11">
    <location>
        <begin position="1"/>
        <end position="143"/>
    </location>
</feature>